<reference key="1">
    <citation type="journal article" date="2004" name="Nature">
        <title>Genome evolution in yeasts.</title>
        <authorList>
            <person name="Dujon B."/>
            <person name="Sherman D."/>
            <person name="Fischer G."/>
            <person name="Durrens P."/>
            <person name="Casaregola S."/>
            <person name="Lafontaine I."/>
            <person name="de Montigny J."/>
            <person name="Marck C."/>
            <person name="Neuveglise C."/>
            <person name="Talla E."/>
            <person name="Goffard N."/>
            <person name="Frangeul L."/>
            <person name="Aigle M."/>
            <person name="Anthouard V."/>
            <person name="Babour A."/>
            <person name="Barbe V."/>
            <person name="Barnay S."/>
            <person name="Blanchin S."/>
            <person name="Beckerich J.-M."/>
            <person name="Beyne E."/>
            <person name="Bleykasten C."/>
            <person name="Boisrame A."/>
            <person name="Boyer J."/>
            <person name="Cattolico L."/>
            <person name="Confanioleri F."/>
            <person name="de Daruvar A."/>
            <person name="Despons L."/>
            <person name="Fabre E."/>
            <person name="Fairhead C."/>
            <person name="Ferry-Dumazet H."/>
            <person name="Groppi A."/>
            <person name="Hantraye F."/>
            <person name="Hennequin C."/>
            <person name="Jauniaux N."/>
            <person name="Joyet P."/>
            <person name="Kachouri R."/>
            <person name="Kerrest A."/>
            <person name="Koszul R."/>
            <person name="Lemaire M."/>
            <person name="Lesur I."/>
            <person name="Ma L."/>
            <person name="Muller H."/>
            <person name="Nicaud J.-M."/>
            <person name="Nikolski M."/>
            <person name="Oztas S."/>
            <person name="Ozier-Kalogeropoulos O."/>
            <person name="Pellenz S."/>
            <person name="Potier S."/>
            <person name="Richard G.-F."/>
            <person name="Straub M.-L."/>
            <person name="Suleau A."/>
            <person name="Swennen D."/>
            <person name="Tekaia F."/>
            <person name="Wesolowski-Louvel M."/>
            <person name="Westhof E."/>
            <person name="Wirth B."/>
            <person name="Zeniou-Meyer M."/>
            <person name="Zivanovic Y."/>
            <person name="Bolotin-Fukuhara M."/>
            <person name="Thierry A."/>
            <person name="Bouchier C."/>
            <person name="Caudron B."/>
            <person name="Scarpelli C."/>
            <person name="Gaillardin C."/>
            <person name="Weissenbach J."/>
            <person name="Wincker P."/>
            <person name="Souciet J.-L."/>
        </authorList>
    </citation>
    <scope>NUCLEOTIDE SEQUENCE [LARGE SCALE GENOMIC DNA]</scope>
    <source>
        <strain>ATCC 2001 / BCRC 20586 / JCM 3761 / NBRC 0622 / NRRL Y-65 / CBS 138</strain>
    </source>
</reference>
<name>EFGM_CANGA</name>
<keyword id="KW-0251">Elongation factor</keyword>
<keyword id="KW-0342">GTP-binding</keyword>
<keyword id="KW-0496">Mitochondrion</keyword>
<keyword id="KW-0547">Nucleotide-binding</keyword>
<keyword id="KW-0648">Protein biosynthesis</keyword>
<keyword id="KW-1185">Reference proteome</keyword>
<keyword id="KW-0809">Transit peptide</keyword>
<dbReference type="EMBL" id="CR380952">
    <property type="protein sequence ID" value="CAG58962.1"/>
    <property type="molecule type" value="Genomic_DNA"/>
</dbReference>
<dbReference type="RefSeq" id="XP_446038.1">
    <property type="nucleotide sequence ID" value="XM_446038.1"/>
</dbReference>
<dbReference type="SMR" id="Q6FUQ6"/>
<dbReference type="FunCoup" id="Q6FUQ6">
    <property type="interactions" value="696"/>
</dbReference>
<dbReference type="STRING" id="284593.Q6FUQ6"/>
<dbReference type="EnsemblFungi" id="CAGL0F01529g-T">
    <property type="protein sequence ID" value="CAGL0F01529g-T-p1"/>
    <property type="gene ID" value="CAGL0F01529g"/>
</dbReference>
<dbReference type="KEGG" id="cgr:2887593"/>
<dbReference type="CGD" id="CAL0129234">
    <property type="gene designation" value="CAGL0F01529g"/>
</dbReference>
<dbReference type="VEuPathDB" id="FungiDB:CAGL0F01529g"/>
<dbReference type="eggNOG" id="KOG0465">
    <property type="taxonomic scope" value="Eukaryota"/>
</dbReference>
<dbReference type="HOGENOM" id="CLU_002794_4_0_1"/>
<dbReference type="InParanoid" id="Q6FUQ6"/>
<dbReference type="OMA" id="GQFAKVQ"/>
<dbReference type="UniPathway" id="UPA00345"/>
<dbReference type="Proteomes" id="UP000002428">
    <property type="component" value="Chromosome F"/>
</dbReference>
<dbReference type="GO" id="GO:0005739">
    <property type="term" value="C:mitochondrion"/>
    <property type="evidence" value="ECO:0007669"/>
    <property type="project" value="UniProtKB-SubCell"/>
</dbReference>
<dbReference type="GO" id="GO:0005525">
    <property type="term" value="F:GTP binding"/>
    <property type="evidence" value="ECO:0007669"/>
    <property type="project" value="UniProtKB-UniRule"/>
</dbReference>
<dbReference type="GO" id="GO:0003924">
    <property type="term" value="F:GTPase activity"/>
    <property type="evidence" value="ECO:0007669"/>
    <property type="project" value="UniProtKB-UniRule"/>
</dbReference>
<dbReference type="GO" id="GO:0003746">
    <property type="term" value="F:translation elongation factor activity"/>
    <property type="evidence" value="ECO:0007669"/>
    <property type="project" value="UniProtKB-UniRule"/>
</dbReference>
<dbReference type="GO" id="GO:0070125">
    <property type="term" value="P:mitochondrial translational elongation"/>
    <property type="evidence" value="ECO:0007669"/>
    <property type="project" value="UniProtKB-UniRule"/>
</dbReference>
<dbReference type="CDD" id="cd01886">
    <property type="entry name" value="EF-G"/>
    <property type="match status" value="1"/>
</dbReference>
<dbReference type="CDD" id="cd16262">
    <property type="entry name" value="EFG_III"/>
    <property type="match status" value="1"/>
</dbReference>
<dbReference type="CDD" id="cd01434">
    <property type="entry name" value="EFG_mtEFG1_IV"/>
    <property type="match status" value="1"/>
</dbReference>
<dbReference type="CDD" id="cd04091">
    <property type="entry name" value="mtEFG1_II_like"/>
    <property type="match status" value="1"/>
</dbReference>
<dbReference type="FunFam" id="3.30.230.10:FF:000003">
    <property type="entry name" value="Elongation factor G"/>
    <property type="match status" value="1"/>
</dbReference>
<dbReference type="FunFam" id="3.30.70.870:FF:000001">
    <property type="entry name" value="Elongation factor G"/>
    <property type="match status" value="1"/>
</dbReference>
<dbReference type="FunFam" id="2.40.30.10:FF:000022">
    <property type="entry name" value="Elongation factor G, mitochondrial"/>
    <property type="match status" value="1"/>
</dbReference>
<dbReference type="FunFam" id="3.30.70.240:FF:000015">
    <property type="entry name" value="Elongation factor G, mitochondrial"/>
    <property type="match status" value="1"/>
</dbReference>
<dbReference type="FunFam" id="3.40.50.300:FF:000558">
    <property type="entry name" value="Elongation factor G, mitochondrial"/>
    <property type="match status" value="1"/>
</dbReference>
<dbReference type="Gene3D" id="3.30.230.10">
    <property type="match status" value="1"/>
</dbReference>
<dbReference type="Gene3D" id="3.30.70.240">
    <property type="match status" value="1"/>
</dbReference>
<dbReference type="Gene3D" id="3.30.70.870">
    <property type="entry name" value="Elongation Factor G (Translational Gtpase), domain 3"/>
    <property type="match status" value="1"/>
</dbReference>
<dbReference type="Gene3D" id="3.40.50.300">
    <property type="entry name" value="P-loop containing nucleotide triphosphate hydrolases"/>
    <property type="match status" value="1"/>
</dbReference>
<dbReference type="Gene3D" id="2.40.30.10">
    <property type="entry name" value="Translation factors"/>
    <property type="match status" value="1"/>
</dbReference>
<dbReference type="HAMAP" id="MF_00054_B">
    <property type="entry name" value="EF_G_EF_2_B"/>
    <property type="match status" value="1"/>
</dbReference>
<dbReference type="InterPro" id="IPR041095">
    <property type="entry name" value="EFG_II"/>
</dbReference>
<dbReference type="InterPro" id="IPR009022">
    <property type="entry name" value="EFG_III"/>
</dbReference>
<dbReference type="InterPro" id="IPR035647">
    <property type="entry name" value="EFG_III/V"/>
</dbReference>
<dbReference type="InterPro" id="IPR047872">
    <property type="entry name" value="EFG_IV"/>
</dbReference>
<dbReference type="InterPro" id="IPR000640">
    <property type="entry name" value="EFG_V-like"/>
</dbReference>
<dbReference type="InterPro" id="IPR004161">
    <property type="entry name" value="EFTu-like_2"/>
</dbReference>
<dbReference type="InterPro" id="IPR031157">
    <property type="entry name" value="G_TR_CS"/>
</dbReference>
<dbReference type="InterPro" id="IPR027417">
    <property type="entry name" value="P-loop_NTPase"/>
</dbReference>
<dbReference type="InterPro" id="IPR020568">
    <property type="entry name" value="Ribosomal_Su5_D2-typ_SF"/>
</dbReference>
<dbReference type="InterPro" id="IPR014721">
    <property type="entry name" value="Ribsml_uS5_D2-typ_fold_subgr"/>
</dbReference>
<dbReference type="InterPro" id="IPR005225">
    <property type="entry name" value="Small_GTP-bd"/>
</dbReference>
<dbReference type="InterPro" id="IPR000795">
    <property type="entry name" value="T_Tr_GTP-bd_dom"/>
</dbReference>
<dbReference type="InterPro" id="IPR009000">
    <property type="entry name" value="Transl_B-barrel_sf"/>
</dbReference>
<dbReference type="InterPro" id="IPR004540">
    <property type="entry name" value="Transl_elong_EFG/EF2"/>
</dbReference>
<dbReference type="InterPro" id="IPR005517">
    <property type="entry name" value="Transl_elong_EFG/EF2_IV"/>
</dbReference>
<dbReference type="NCBIfam" id="TIGR00484">
    <property type="entry name" value="EF-G"/>
    <property type="match status" value="1"/>
</dbReference>
<dbReference type="NCBIfam" id="NF009381">
    <property type="entry name" value="PRK12740.1-5"/>
    <property type="match status" value="1"/>
</dbReference>
<dbReference type="NCBIfam" id="TIGR00231">
    <property type="entry name" value="small_GTP"/>
    <property type="match status" value="1"/>
</dbReference>
<dbReference type="PANTHER" id="PTHR43636">
    <property type="entry name" value="ELONGATION FACTOR G, MITOCHONDRIAL"/>
    <property type="match status" value="1"/>
</dbReference>
<dbReference type="PANTHER" id="PTHR43636:SF2">
    <property type="entry name" value="ELONGATION FACTOR G, MITOCHONDRIAL"/>
    <property type="match status" value="1"/>
</dbReference>
<dbReference type="Pfam" id="PF00679">
    <property type="entry name" value="EFG_C"/>
    <property type="match status" value="1"/>
</dbReference>
<dbReference type="Pfam" id="PF14492">
    <property type="entry name" value="EFG_III"/>
    <property type="match status" value="1"/>
</dbReference>
<dbReference type="Pfam" id="PF03764">
    <property type="entry name" value="EFG_IV"/>
    <property type="match status" value="1"/>
</dbReference>
<dbReference type="Pfam" id="PF00009">
    <property type="entry name" value="GTP_EFTU"/>
    <property type="match status" value="1"/>
</dbReference>
<dbReference type="Pfam" id="PF03144">
    <property type="entry name" value="GTP_EFTU_D2"/>
    <property type="match status" value="1"/>
</dbReference>
<dbReference type="PRINTS" id="PR00315">
    <property type="entry name" value="ELONGATNFCT"/>
</dbReference>
<dbReference type="SMART" id="SM00838">
    <property type="entry name" value="EFG_C"/>
    <property type="match status" value="1"/>
</dbReference>
<dbReference type="SMART" id="SM00889">
    <property type="entry name" value="EFG_IV"/>
    <property type="match status" value="1"/>
</dbReference>
<dbReference type="SUPFAM" id="SSF54980">
    <property type="entry name" value="EF-G C-terminal domain-like"/>
    <property type="match status" value="2"/>
</dbReference>
<dbReference type="SUPFAM" id="SSF52540">
    <property type="entry name" value="P-loop containing nucleoside triphosphate hydrolases"/>
    <property type="match status" value="1"/>
</dbReference>
<dbReference type="SUPFAM" id="SSF54211">
    <property type="entry name" value="Ribosomal protein S5 domain 2-like"/>
    <property type="match status" value="1"/>
</dbReference>
<dbReference type="SUPFAM" id="SSF50447">
    <property type="entry name" value="Translation proteins"/>
    <property type="match status" value="1"/>
</dbReference>
<dbReference type="PROSITE" id="PS00301">
    <property type="entry name" value="G_TR_1"/>
    <property type="match status" value="1"/>
</dbReference>
<dbReference type="PROSITE" id="PS51722">
    <property type="entry name" value="G_TR_2"/>
    <property type="match status" value="1"/>
</dbReference>
<feature type="transit peptide" description="Mitochondrion" evidence="1">
    <location>
        <begin position="1"/>
        <end position="39"/>
    </location>
</feature>
<feature type="chain" id="PRO_0000385566" description="Elongation factor G, mitochondrial">
    <location>
        <begin position="40"/>
        <end position="757"/>
    </location>
</feature>
<feature type="domain" description="tr-type G">
    <location>
        <begin position="65"/>
        <end position="346"/>
    </location>
</feature>
<feature type="binding site" evidence="1">
    <location>
        <begin position="74"/>
        <end position="81"/>
    </location>
    <ligand>
        <name>GTP</name>
        <dbReference type="ChEBI" id="CHEBI:37565"/>
    </ligand>
</feature>
<feature type="binding site" evidence="1">
    <location>
        <begin position="145"/>
        <end position="149"/>
    </location>
    <ligand>
        <name>GTP</name>
        <dbReference type="ChEBI" id="CHEBI:37565"/>
    </ligand>
</feature>
<feature type="binding site" evidence="1">
    <location>
        <begin position="199"/>
        <end position="202"/>
    </location>
    <ligand>
        <name>GTP</name>
        <dbReference type="ChEBI" id="CHEBI:37565"/>
    </ligand>
</feature>
<proteinExistence type="inferred from homology"/>
<sequence length="757" mass="84325">MLLVPRVPVVMQGKCGLLKISRPLQGSLSRGFHFSRAHRSEYDEEKVVIDEINKKLTPVDIQNQQKLRNIGISAHIDSGKTTFTERVLYYTKRIKEIHEVRGRDNVGATMDFMDLEREKGITIQSAATYCSWDKDKNSYHFNLIDTPGHIDFTIEVERALRVLDGAVLVVCAVSGVQSQTVTVDRQMRRYNVPRVTFINKMDRMGANPFKAIEQLNSKLKLPAAAVQVPIGAESELKGVVDLLDMKAYYNKGDNGEIIESGPIPEELKSLAEEKRQVLIETLADVDEHMAEIFLEEKEPTIQEMKDAIRRATIARKFTPVLMGSALANTGVQHVLDAIVDYLPNPSEVLNTGLDIAHEEAKVNLIPSVQQPFVGLAFKLEEGKYGQLTYIRVYQGRLKKGSYITNVKTGKKVKVSRLVRMHSNEMEDVDEVGSGEICATFGIDCSSGDTFSDGTLQYSMSSMFVPDAVVSLSITPKSKDSTNFSKALNRFQKEDPTFRVRFDPESKETVISGMGELHLEIYVERMKREYNVECITGKPQVSYRESITIPSEFDYTHKKQSGGAGQYARIIGDLSPVEGGNKSNVFETHVVGGRIPDKYLSACAKGFDEACERGPLIGHKVLNVKMLINDGAIHSVDSNELAFKVATLTAFRDAFLKAQPVIMEPIMIVSVTSPNEFQGNVIGLLNKLQAVIQETDNGHDEFTLRAECSLSTMFGFASSLRASTQGKGEFSLEFSHYAPTAPHVQKELIAEFQKKQKK</sequence>
<evidence type="ECO:0000255" key="1">
    <source>
        <dbReference type="HAMAP-Rule" id="MF_03061"/>
    </source>
</evidence>
<evidence type="ECO:0000305" key="2"/>
<accession>Q6FUQ6</accession>
<gene>
    <name evidence="1" type="primary">MEF1</name>
    <name type="ordered locus">CAGL0F01529g</name>
</gene>
<organism>
    <name type="scientific">Candida glabrata (strain ATCC 2001 / BCRC 20586 / JCM 3761 / NBRC 0622 / NRRL Y-65 / CBS 138)</name>
    <name type="common">Yeast</name>
    <name type="synonym">Nakaseomyces glabratus</name>
    <dbReference type="NCBI Taxonomy" id="284593"/>
    <lineage>
        <taxon>Eukaryota</taxon>
        <taxon>Fungi</taxon>
        <taxon>Dikarya</taxon>
        <taxon>Ascomycota</taxon>
        <taxon>Saccharomycotina</taxon>
        <taxon>Saccharomycetes</taxon>
        <taxon>Saccharomycetales</taxon>
        <taxon>Saccharomycetaceae</taxon>
        <taxon>Nakaseomyces</taxon>
    </lineage>
</organism>
<protein>
    <recommendedName>
        <fullName evidence="1">Elongation factor G, mitochondrial</fullName>
        <shortName evidence="1">EF-Gmt</shortName>
    </recommendedName>
    <alternativeName>
        <fullName evidence="1">Elongation factor G 1, mitochondrial</fullName>
        <shortName evidence="1">mEF-G 1</shortName>
    </alternativeName>
    <alternativeName>
        <fullName evidence="1">Elongation factor G1</fullName>
    </alternativeName>
</protein>
<comment type="function">
    <text evidence="1">Mitochondrial GTPase that catalyzes the GTP-dependent ribosomal translocation step during translation elongation. During this step, the ribosome changes from the pre-translocational (PRE) to the post-translocational (POST) state as the newly formed A-site-bound peptidyl-tRNA and P-site-bound deacylated tRNA move to the P and E sites, respectively. Catalyzes the coordinated movement of the two tRNA molecules, the mRNA and conformational changes in the ribosome.</text>
</comment>
<comment type="pathway">
    <text evidence="1">Protein biosynthesis; polypeptide chain elongation.</text>
</comment>
<comment type="subcellular location">
    <subcellularLocation>
        <location evidence="1">Mitochondrion</location>
    </subcellularLocation>
</comment>
<comment type="similarity">
    <text evidence="2">Belongs to the TRAFAC class translation factor GTPase superfamily. Classic translation factor GTPase family. EF-G/EF-2 subfamily.</text>
</comment>